<dbReference type="EMBL" id="L20825">
    <property type="protein sequence ID" value="AAA16199.1"/>
    <property type="molecule type" value="Unassigned_DNA"/>
</dbReference>
<dbReference type="EMBL" id="AF031901">
    <property type="protein sequence ID" value="AAC29013.1"/>
    <property type="molecule type" value="Genomic_DNA"/>
</dbReference>
<dbReference type="PIR" id="B49908">
    <property type="entry name" value="B49908"/>
</dbReference>
<dbReference type="RefSeq" id="YP_002300288.1">
    <property type="nucleotide sequence ID" value="NC_011421.1"/>
</dbReference>
<dbReference type="PDB" id="6L6V">
    <property type="method" value="NMR"/>
    <property type="chains" value="A=1-55"/>
</dbReference>
<dbReference type="PDBsum" id="6L6V"/>
<dbReference type="SMR" id="Q08402"/>
<dbReference type="GeneID" id="7009001"/>
<dbReference type="KEGG" id="vg:7009001"/>
<evidence type="ECO:0000256" key="1">
    <source>
        <dbReference type="SAM" id="MobiDB-lite"/>
    </source>
</evidence>
<evidence type="ECO:0007829" key="2">
    <source>
        <dbReference type="PDB" id="6L6V"/>
    </source>
</evidence>
<proteinExistence type="evidence at protein level"/>
<protein>
    <recommendedName>
        <fullName>E3 protein</fullName>
    </recommendedName>
    <alternativeName>
        <fullName>Gene 44 protein</fullName>
    </alternativeName>
</protein>
<comment type="function">
    <text>Hypothesized to function in the shutoff of host biosyntheses. But it seems dispensable both for host shutoff and for phage multiplication. Its shutoff function is probably not entirely specific to host activities.</text>
</comment>
<gene>
    <name type="primary">44</name>
</gene>
<sequence length="237" mass="26947">MAKSNNVYVVNGEEKVSTLAEVAKVLGVSRVSKKDVEEGKYDVVVEEAAVSLADTEEVVEEVVTEEEDILEGVEVVEDEEEEEAAEDVEEPTSEEDSEDEWEEGYPVATEVEEDEDEEIEYPEVGDFEDEKAIKKYIKGLTDEQLQAWCELEGAEWVENEHRNINRMRMAMAIKAVHFPELAKKPSSKKKSKYAEYTTEELVEMAIDNNVEVRDDKGNERILRMYTIIALREAGLIS</sequence>
<keyword id="KW-0002">3D-structure</keyword>
<reference key="1">
    <citation type="journal article" date="1993" name="J. Bacteriol.">
        <title>A cytotoxic early gene of Bacillus subtilis bacteriophage SPO1.</title>
        <authorList>
            <person name="Wei P."/>
            <person name="Stewart C.R."/>
        </authorList>
    </citation>
    <scope>NUCLEOTIDE SEQUENCE</scope>
</reference>
<reference key="2">
    <citation type="journal article" date="1998" name="Virology">
        <title>Genes and regulatory sites of the 'host-takeover module' in the terminal redundancy of Bacillus subtilis bacteriophage SPO1.</title>
        <authorList>
            <person name="Stewart C.R."/>
            <person name="Gaslightwala I."/>
            <person name="Hinata K."/>
            <person name="Krolikowski K.A."/>
            <person name="Needleman D.S."/>
            <person name="Peng A.S.-Y."/>
            <person name="Peterman M.A."/>
            <person name="Tobias A."/>
            <person name="Wei P."/>
        </authorList>
    </citation>
    <scope>NUCLEOTIDE SEQUENCE [GENOMIC DNA]</scope>
</reference>
<organism>
    <name type="scientific">Bacillus phage SP01</name>
    <name type="common">Bacteriophage SP01</name>
    <dbReference type="NCBI Taxonomy" id="2884427"/>
    <lineage>
        <taxon>Viruses</taxon>
        <taxon>Duplodnaviria</taxon>
        <taxon>Heunggongvirae</taxon>
        <taxon>Uroviricota</taxon>
        <taxon>Caudoviricetes</taxon>
        <taxon>Herelleviridae</taxon>
        <taxon>Spounavirinae</taxon>
        <taxon>Okubovirus</taxon>
        <taxon>Okubovirus SPO1</taxon>
    </lineage>
</organism>
<accession>Q08402</accession>
<organismHost>
    <name type="scientific">Bacillus subtilis</name>
    <dbReference type="NCBI Taxonomy" id="1423"/>
</organismHost>
<feature type="chain" id="PRO_0000106150" description="E3 protein">
    <location>
        <begin position="1"/>
        <end position="237"/>
    </location>
</feature>
<feature type="region of interest" description="Disordered" evidence="1">
    <location>
        <begin position="73"/>
        <end position="105"/>
    </location>
</feature>
<feature type="compositionally biased region" description="Acidic residues" evidence="1">
    <location>
        <begin position="73"/>
        <end position="103"/>
    </location>
</feature>
<feature type="strand" evidence="2">
    <location>
        <begin position="4"/>
        <end position="13"/>
    </location>
</feature>
<feature type="strand" evidence="2">
    <location>
        <begin position="15"/>
        <end position="18"/>
    </location>
</feature>
<feature type="helix" evidence="2">
    <location>
        <begin position="20"/>
        <end position="25"/>
    </location>
</feature>
<feature type="helix" evidence="2">
    <location>
        <begin position="33"/>
        <end position="38"/>
    </location>
</feature>
<feature type="strand" evidence="2">
    <location>
        <begin position="45"/>
        <end position="49"/>
    </location>
</feature>
<name>GP44_BPSP1</name>